<protein>
    <recommendedName>
        <fullName evidence="1">Glutamine--fructose-6-phosphate aminotransferase [isomerizing]</fullName>
        <ecNumber evidence="1">2.6.1.16</ecNumber>
    </recommendedName>
    <alternativeName>
        <fullName evidence="1">D-fructose-6-phosphate amidotransferase</fullName>
    </alternativeName>
    <alternativeName>
        <fullName evidence="1">GFAT</fullName>
    </alternativeName>
    <alternativeName>
        <fullName evidence="1">Glucosamine-6-phosphate synthase</fullName>
    </alternativeName>
    <alternativeName>
        <fullName evidence="1">Hexosephosphate aminotransferase</fullName>
    </alternativeName>
    <alternativeName>
        <fullName evidence="1">L-glutamine--D-fructose-6-phosphate amidotransferase</fullName>
    </alternativeName>
</protein>
<name>GLMS_CORDI</name>
<evidence type="ECO:0000255" key="1">
    <source>
        <dbReference type="HAMAP-Rule" id="MF_00164"/>
    </source>
</evidence>
<reference key="1">
    <citation type="journal article" date="2003" name="Nucleic Acids Res.">
        <title>The complete genome sequence and analysis of Corynebacterium diphtheriae NCTC13129.</title>
        <authorList>
            <person name="Cerdeno-Tarraga A.-M."/>
            <person name="Efstratiou A."/>
            <person name="Dover L.G."/>
            <person name="Holden M.T.G."/>
            <person name="Pallen M.J."/>
            <person name="Bentley S.D."/>
            <person name="Besra G.S."/>
            <person name="Churcher C.M."/>
            <person name="James K.D."/>
            <person name="De Zoysa A."/>
            <person name="Chillingworth T."/>
            <person name="Cronin A."/>
            <person name="Dowd L."/>
            <person name="Feltwell T."/>
            <person name="Hamlin N."/>
            <person name="Holroyd S."/>
            <person name="Jagels K."/>
            <person name="Moule S."/>
            <person name="Quail M.A."/>
            <person name="Rabbinowitsch E."/>
            <person name="Rutherford K.M."/>
            <person name="Thomson N.R."/>
            <person name="Unwin L."/>
            <person name="Whitehead S."/>
            <person name="Barrell B.G."/>
            <person name="Parkhill J."/>
        </authorList>
    </citation>
    <scope>NUCLEOTIDE SEQUENCE [LARGE SCALE GENOMIC DNA]</scope>
    <source>
        <strain>ATCC 700971 / NCTC 13129 / Biotype gravis</strain>
    </source>
</reference>
<gene>
    <name evidence="1" type="primary">glmS</name>
    <name type="ordered locus">DIP1700</name>
</gene>
<feature type="initiator methionine" description="Removed" evidence="1">
    <location>
        <position position="1"/>
    </location>
</feature>
<feature type="chain" id="PRO_0000135325" description="Glutamine--fructose-6-phosphate aminotransferase [isomerizing]">
    <location>
        <begin position="2"/>
        <end position="625"/>
    </location>
</feature>
<feature type="domain" description="Glutamine amidotransferase type-2" evidence="1">
    <location>
        <begin position="2"/>
        <end position="229"/>
    </location>
</feature>
<feature type="domain" description="SIS 1" evidence="1">
    <location>
        <begin position="296"/>
        <end position="436"/>
    </location>
</feature>
<feature type="domain" description="SIS 2" evidence="1">
    <location>
        <begin position="470"/>
        <end position="615"/>
    </location>
</feature>
<feature type="active site" description="Nucleophile; for GATase activity" evidence="1">
    <location>
        <position position="2"/>
    </location>
</feature>
<feature type="active site" description="For Fru-6P isomerization activity" evidence="1">
    <location>
        <position position="620"/>
    </location>
</feature>
<comment type="function">
    <text evidence="1">Catalyzes the first step in hexosamine metabolism, converting fructose-6P into glucosamine-6P using glutamine as a nitrogen source.</text>
</comment>
<comment type="catalytic activity">
    <reaction evidence="1">
        <text>D-fructose 6-phosphate + L-glutamine = D-glucosamine 6-phosphate + L-glutamate</text>
        <dbReference type="Rhea" id="RHEA:13237"/>
        <dbReference type="ChEBI" id="CHEBI:29985"/>
        <dbReference type="ChEBI" id="CHEBI:58359"/>
        <dbReference type="ChEBI" id="CHEBI:58725"/>
        <dbReference type="ChEBI" id="CHEBI:61527"/>
        <dbReference type="EC" id="2.6.1.16"/>
    </reaction>
</comment>
<comment type="subunit">
    <text evidence="1">Homodimer.</text>
</comment>
<comment type="subcellular location">
    <subcellularLocation>
        <location evidence="1">Cytoplasm</location>
    </subcellularLocation>
</comment>
<keyword id="KW-0032">Aminotransferase</keyword>
<keyword id="KW-0963">Cytoplasm</keyword>
<keyword id="KW-0315">Glutamine amidotransferase</keyword>
<keyword id="KW-1185">Reference proteome</keyword>
<keyword id="KW-0677">Repeat</keyword>
<keyword id="KW-0808">Transferase</keyword>
<proteinExistence type="inferred from homology"/>
<accession>Q6NG33</accession>
<organism>
    <name type="scientific">Corynebacterium diphtheriae (strain ATCC 700971 / NCTC 13129 / Biotype gravis)</name>
    <dbReference type="NCBI Taxonomy" id="257309"/>
    <lineage>
        <taxon>Bacteria</taxon>
        <taxon>Bacillati</taxon>
        <taxon>Actinomycetota</taxon>
        <taxon>Actinomycetes</taxon>
        <taxon>Mycobacteriales</taxon>
        <taxon>Corynebacteriaceae</taxon>
        <taxon>Corynebacterium</taxon>
    </lineage>
</organism>
<dbReference type="EC" id="2.6.1.16" evidence="1"/>
<dbReference type="EMBL" id="BX248359">
    <property type="protein sequence ID" value="CAE50229.1"/>
    <property type="molecule type" value="Genomic_DNA"/>
</dbReference>
<dbReference type="RefSeq" id="WP_010935264.1">
    <property type="nucleotide sequence ID" value="NC_002935.2"/>
</dbReference>
<dbReference type="SMR" id="Q6NG33"/>
<dbReference type="STRING" id="257309.DIP1700"/>
<dbReference type="KEGG" id="cdi:DIP1700"/>
<dbReference type="HOGENOM" id="CLU_012520_5_2_11"/>
<dbReference type="Proteomes" id="UP000002198">
    <property type="component" value="Chromosome"/>
</dbReference>
<dbReference type="GO" id="GO:0005829">
    <property type="term" value="C:cytosol"/>
    <property type="evidence" value="ECO:0007669"/>
    <property type="project" value="TreeGrafter"/>
</dbReference>
<dbReference type="GO" id="GO:0097367">
    <property type="term" value="F:carbohydrate derivative binding"/>
    <property type="evidence" value="ECO:0007669"/>
    <property type="project" value="InterPro"/>
</dbReference>
<dbReference type="GO" id="GO:0004360">
    <property type="term" value="F:glutamine-fructose-6-phosphate transaminase (isomerizing) activity"/>
    <property type="evidence" value="ECO:0007669"/>
    <property type="project" value="UniProtKB-UniRule"/>
</dbReference>
<dbReference type="GO" id="GO:0005975">
    <property type="term" value="P:carbohydrate metabolic process"/>
    <property type="evidence" value="ECO:0007669"/>
    <property type="project" value="UniProtKB-UniRule"/>
</dbReference>
<dbReference type="GO" id="GO:0006002">
    <property type="term" value="P:fructose 6-phosphate metabolic process"/>
    <property type="evidence" value="ECO:0007669"/>
    <property type="project" value="TreeGrafter"/>
</dbReference>
<dbReference type="GO" id="GO:0006487">
    <property type="term" value="P:protein N-linked glycosylation"/>
    <property type="evidence" value="ECO:0007669"/>
    <property type="project" value="TreeGrafter"/>
</dbReference>
<dbReference type="GO" id="GO:0006047">
    <property type="term" value="P:UDP-N-acetylglucosamine metabolic process"/>
    <property type="evidence" value="ECO:0007669"/>
    <property type="project" value="TreeGrafter"/>
</dbReference>
<dbReference type="CDD" id="cd00714">
    <property type="entry name" value="GFAT"/>
    <property type="match status" value="1"/>
</dbReference>
<dbReference type="CDD" id="cd05008">
    <property type="entry name" value="SIS_GlmS_GlmD_1"/>
    <property type="match status" value="1"/>
</dbReference>
<dbReference type="CDD" id="cd05009">
    <property type="entry name" value="SIS_GlmS_GlmD_2"/>
    <property type="match status" value="1"/>
</dbReference>
<dbReference type="FunFam" id="3.40.50.10490:FF:000001">
    <property type="entry name" value="Glutamine--fructose-6-phosphate aminotransferase [isomerizing]"/>
    <property type="match status" value="1"/>
</dbReference>
<dbReference type="FunFam" id="3.60.20.10:FF:000006">
    <property type="entry name" value="Glutamine--fructose-6-phosphate aminotransferase [isomerizing]"/>
    <property type="match status" value="1"/>
</dbReference>
<dbReference type="Gene3D" id="3.40.50.10490">
    <property type="entry name" value="Glucose-6-phosphate isomerase like protein, domain 1"/>
    <property type="match status" value="2"/>
</dbReference>
<dbReference type="Gene3D" id="3.60.20.10">
    <property type="entry name" value="Glutamine Phosphoribosylpyrophosphate, subunit 1, domain 1"/>
    <property type="match status" value="1"/>
</dbReference>
<dbReference type="HAMAP" id="MF_00164">
    <property type="entry name" value="GlmS"/>
    <property type="match status" value="1"/>
</dbReference>
<dbReference type="InterPro" id="IPR017932">
    <property type="entry name" value="GATase_2_dom"/>
</dbReference>
<dbReference type="InterPro" id="IPR005855">
    <property type="entry name" value="GFAT"/>
</dbReference>
<dbReference type="InterPro" id="IPR047084">
    <property type="entry name" value="GFAT_N"/>
</dbReference>
<dbReference type="InterPro" id="IPR035466">
    <property type="entry name" value="GlmS/AgaS_SIS"/>
</dbReference>
<dbReference type="InterPro" id="IPR035490">
    <property type="entry name" value="GlmS/FrlB_SIS"/>
</dbReference>
<dbReference type="InterPro" id="IPR029055">
    <property type="entry name" value="Ntn_hydrolases_N"/>
</dbReference>
<dbReference type="InterPro" id="IPR001347">
    <property type="entry name" value="SIS_dom"/>
</dbReference>
<dbReference type="InterPro" id="IPR046348">
    <property type="entry name" value="SIS_dom_sf"/>
</dbReference>
<dbReference type="NCBIfam" id="TIGR01135">
    <property type="entry name" value="glmS"/>
    <property type="match status" value="1"/>
</dbReference>
<dbReference type="NCBIfam" id="NF001484">
    <property type="entry name" value="PRK00331.1"/>
    <property type="match status" value="1"/>
</dbReference>
<dbReference type="PANTHER" id="PTHR10937">
    <property type="entry name" value="GLUCOSAMINE--FRUCTOSE-6-PHOSPHATE AMINOTRANSFERASE, ISOMERIZING"/>
    <property type="match status" value="1"/>
</dbReference>
<dbReference type="PANTHER" id="PTHR10937:SF0">
    <property type="entry name" value="GLUTAMINE--FRUCTOSE-6-PHOSPHATE TRANSAMINASE (ISOMERIZING)"/>
    <property type="match status" value="1"/>
</dbReference>
<dbReference type="Pfam" id="PF13522">
    <property type="entry name" value="GATase_6"/>
    <property type="match status" value="1"/>
</dbReference>
<dbReference type="Pfam" id="PF01380">
    <property type="entry name" value="SIS"/>
    <property type="match status" value="2"/>
</dbReference>
<dbReference type="SUPFAM" id="SSF56235">
    <property type="entry name" value="N-terminal nucleophile aminohydrolases (Ntn hydrolases)"/>
    <property type="match status" value="1"/>
</dbReference>
<dbReference type="SUPFAM" id="SSF53697">
    <property type="entry name" value="SIS domain"/>
    <property type="match status" value="1"/>
</dbReference>
<dbReference type="PROSITE" id="PS51278">
    <property type="entry name" value="GATASE_TYPE_2"/>
    <property type="match status" value="1"/>
</dbReference>
<dbReference type="PROSITE" id="PS51464">
    <property type="entry name" value="SIS"/>
    <property type="match status" value="2"/>
</dbReference>
<sequence length="625" mass="67666">MCGIVGFVGRTSVPDRDYFALDVVLEGLRRLEYRGYDSAGVAVVADGAVSFRKKAGKVQALEQELETSPMPQSCLGIGHTRWATHGGPTDANAHPHVVDGGKLAVVHNGIIENFAELKSELLGFGHNFVSETDTEVAATLLGHIFNNEANKDLTRAMQLTCQRLEGAFTLLAIHAETPDRIVAARRNSPLVIGVGEGENFLGSDVSGFIDYTKNAVEMDNDQIVTITADGYHITDFQGNHAEGKPFVVEWDAQAAEKGGYEFFMEKEIHEQPAAVRDTLMGRFDESGKLTLDELRIDESTLRSIDKIIVIACGTAAYAGHVARYAIEHWCRIPTEVELAHEFRYRDPIVNEKTLVVTLSQSGETMDTLMAVRHAREQGAKVIAICNTNGSSIPRESDACLYTHAGPEIAVASTKAFLAQITATYLLGLYLAQLRGNMFADEVNAVLGELRTIPDKVSAVLDGVEDQVKTLAQDMKDATSVLFLGRHVGFPVALEGALKLKELAYLHAEGFAAGELKHGPIALIEEGQPVFVIVPSPRGRDSLHAKVVSNIQEVRARGAITIVIAEEGDDAVEAYANHIIRIPQAPTLMQPLLATVPLQIFACGVAAAKGFDVDQPRNLAKSVTVE</sequence>